<keyword id="KW-0997">Cell inner membrane</keyword>
<keyword id="KW-1003">Cell membrane</keyword>
<keyword id="KW-0472">Membrane</keyword>
<reference key="1">
    <citation type="submission" date="2008-04" db="EMBL/GenBank/DDBJ databases">
        <title>Complete sequence of Yersinia pseudotuberculosis PB1/+.</title>
        <authorList>
            <person name="Copeland A."/>
            <person name="Lucas S."/>
            <person name="Lapidus A."/>
            <person name="Glavina del Rio T."/>
            <person name="Dalin E."/>
            <person name="Tice H."/>
            <person name="Bruce D."/>
            <person name="Goodwin L."/>
            <person name="Pitluck S."/>
            <person name="Munk A.C."/>
            <person name="Brettin T."/>
            <person name="Detter J.C."/>
            <person name="Han C."/>
            <person name="Tapia R."/>
            <person name="Schmutz J."/>
            <person name="Larimer F."/>
            <person name="Land M."/>
            <person name="Hauser L."/>
            <person name="Challacombe J.F."/>
            <person name="Green L."/>
            <person name="Lindler L.E."/>
            <person name="Nikolich M.P."/>
            <person name="Richardson P."/>
        </authorList>
    </citation>
    <scope>NUCLEOTIDE SEQUENCE [LARGE SCALE GENOMIC DNA]</scope>
    <source>
        <strain>PB1/+</strain>
    </source>
</reference>
<feature type="chain" id="PRO_1000122679" description="Putative membrane protein insertion efficiency factor">
    <location>
        <begin position="1"/>
        <end position="85"/>
    </location>
</feature>
<feature type="region of interest" description="Disordered" evidence="2">
    <location>
        <begin position="66"/>
        <end position="85"/>
    </location>
</feature>
<protein>
    <recommendedName>
        <fullName evidence="1">Putative membrane protein insertion efficiency factor</fullName>
    </recommendedName>
</protein>
<accession>B2K870</accession>
<comment type="function">
    <text evidence="1">Could be involved in insertion of integral membrane proteins into the membrane.</text>
</comment>
<comment type="subcellular location">
    <subcellularLocation>
        <location evidence="1">Cell inner membrane</location>
        <topology evidence="1">Peripheral membrane protein</topology>
        <orientation evidence="1">Cytoplasmic side</orientation>
    </subcellularLocation>
</comment>
<comment type="similarity">
    <text evidence="1">Belongs to the UPF0161 family.</text>
</comment>
<dbReference type="EMBL" id="CP001048">
    <property type="protein sequence ID" value="ACC91146.1"/>
    <property type="molecule type" value="Genomic_DNA"/>
</dbReference>
<dbReference type="KEGG" id="ypb:YPTS_4203"/>
<dbReference type="PATRIC" id="fig|502801.10.peg.3673"/>
<dbReference type="GO" id="GO:0005886">
    <property type="term" value="C:plasma membrane"/>
    <property type="evidence" value="ECO:0007669"/>
    <property type="project" value="UniProtKB-SubCell"/>
</dbReference>
<dbReference type="HAMAP" id="MF_00386">
    <property type="entry name" value="UPF0161_YidD"/>
    <property type="match status" value="1"/>
</dbReference>
<dbReference type="InterPro" id="IPR002696">
    <property type="entry name" value="Membr_insert_effic_factor_YidD"/>
</dbReference>
<dbReference type="NCBIfam" id="TIGR00278">
    <property type="entry name" value="membrane protein insertion efficiency factor YidD"/>
    <property type="match status" value="1"/>
</dbReference>
<dbReference type="PANTHER" id="PTHR33383">
    <property type="entry name" value="MEMBRANE PROTEIN INSERTION EFFICIENCY FACTOR-RELATED"/>
    <property type="match status" value="1"/>
</dbReference>
<dbReference type="PANTHER" id="PTHR33383:SF1">
    <property type="entry name" value="MEMBRANE PROTEIN INSERTION EFFICIENCY FACTOR-RELATED"/>
    <property type="match status" value="1"/>
</dbReference>
<dbReference type="Pfam" id="PF01809">
    <property type="entry name" value="YidD"/>
    <property type="match status" value="1"/>
</dbReference>
<dbReference type="SMART" id="SM01234">
    <property type="entry name" value="Haemolytic"/>
    <property type="match status" value="1"/>
</dbReference>
<evidence type="ECO:0000255" key="1">
    <source>
        <dbReference type="HAMAP-Rule" id="MF_00386"/>
    </source>
</evidence>
<evidence type="ECO:0000256" key="2">
    <source>
        <dbReference type="SAM" id="MobiDB-lite"/>
    </source>
</evidence>
<proteinExistence type="inferred from homology"/>
<gene>
    <name type="ordered locus">YPTS_4203</name>
</gene>
<name>YIDD_YERPB</name>
<sequence>MASPLSPGSRILIGLIRGYQLVISPLLGPRCRFHPTCSHYGIEALRRFGMIKGSWLTLKRVLKCHPLNSGGDDPVPPKLDDNREH</sequence>
<organism>
    <name type="scientific">Yersinia pseudotuberculosis serotype IB (strain PB1/+)</name>
    <dbReference type="NCBI Taxonomy" id="502801"/>
    <lineage>
        <taxon>Bacteria</taxon>
        <taxon>Pseudomonadati</taxon>
        <taxon>Pseudomonadota</taxon>
        <taxon>Gammaproteobacteria</taxon>
        <taxon>Enterobacterales</taxon>
        <taxon>Yersiniaceae</taxon>
        <taxon>Yersinia</taxon>
    </lineage>
</organism>